<gene>
    <name evidence="1" type="primary">aceK</name>
    <name type="ordered locus">BTH_I0346</name>
</gene>
<reference key="1">
    <citation type="journal article" date="2005" name="BMC Genomics">
        <title>Bacterial genome adaptation to niches: divergence of the potential virulence genes in three Burkholderia species of different survival strategies.</title>
        <authorList>
            <person name="Kim H.S."/>
            <person name="Schell M.A."/>
            <person name="Yu Y."/>
            <person name="Ulrich R.L."/>
            <person name="Sarria S.H."/>
            <person name="Nierman W.C."/>
            <person name="DeShazer D."/>
        </authorList>
    </citation>
    <scope>NUCLEOTIDE SEQUENCE [LARGE SCALE GENOMIC DNA]</scope>
    <source>
        <strain>ATCC 700388 / DSM 13276 / CCUG 48851 / CIP 106301 / E264</strain>
    </source>
</reference>
<protein>
    <recommendedName>
        <fullName evidence="1">Isocitrate dehydrogenase kinase/phosphatase</fullName>
        <shortName evidence="1">IDH kinase/phosphatase</shortName>
        <shortName evidence="1">IDHK/P</shortName>
        <ecNumber evidence="1">2.7.11.5</ecNumber>
        <ecNumber evidence="1">3.1.3.-</ecNumber>
    </recommendedName>
</protein>
<evidence type="ECO:0000255" key="1">
    <source>
        <dbReference type="HAMAP-Rule" id="MF_00747"/>
    </source>
</evidence>
<name>ACEK_BURTA</name>
<comment type="function">
    <text evidence="1">Bifunctional enzyme which can phosphorylate or dephosphorylate isocitrate dehydrogenase (IDH) on a specific serine residue. This is a regulatory mechanism which enables bacteria to bypass the Krebs cycle via the glyoxylate shunt in response to the source of carbon. When bacteria are grown on glucose, IDH is fully active and unphosphorylated, but when grown on acetate or ethanol, the activity of IDH declines drastically concomitant with its phosphorylation.</text>
</comment>
<comment type="catalytic activity">
    <reaction evidence="1">
        <text>L-seryl-[isocitrate dehydrogenase] + ATP = O-phospho-L-seryl-[isocitrate dehydrogenase] + ADP + H(+)</text>
        <dbReference type="Rhea" id="RHEA:43540"/>
        <dbReference type="Rhea" id="RHEA-COMP:10605"/>
        <dbReference type="Rhea" id="RHEA-COMP:10606"/>
        <dbReference type="ChEBI" id="CHEBI:15378"/>
        <dbReference type="ChEBI" id="CHEBI:29999"/>
        <dbReference type="ChEBI" id="CHEBI:30616"/>
        <dbReference type="ChEBI" id="CHEBI:83421"/>
        <dbReference type="ChEBI" id="CHEBI:456216"/>
        <dbReference type="EC" id="2.7.11.5"/>
    </reaction>
</comment>
<comment type="subcellular location">
    <subcellularLocation>
        <location evidence="1">Cytoplasm</location>
    </subcellularLocation>
</comment>
<comment type="similarity">
    <text evidence="1">Belongs to the AceK family.</text>
</comment>
<feature type="chain" id="PRO_0000259148" description="Isocitrate dehydrogenase kinase/phosphatase">
    <location>
        <begin position="1"/>
        <end position="603"/>
    </location>
</feature>
<feature type="active site" evidence="1">
    <location>
        <position position="383"/>
    </location>
</feature>
<feature type="binding site" evidence="1">
    <location>
        <begin position="327"/>
        <end position="333"/>
    </location>
    <ligand>
        <name>ATP</name>
        <dbReference type="ChEBI" id="CHEBI:30616"/>
    </ligand>
</feature>
<feature type="binding site" evidence="1">
    <location>
        <position position="348"/>
    </location>
    <ligand>
        <name>ATP</name>
        <dbReference type="ChEBI" id="CHEBI:30616"/>
    </ligand>
</feature>
<dbReference type="EC" id="2.7.11.5" evidence="1"/>
<dbReference type="EC" id="3.1.3.-" evidence="1"/>
<dbReference type="EMBL" id="CP000086">
    <property type="protein sequence ID" value="ABC36516.1"/>
    <property type="molecule type" value="Genomic_DNA"/>
</dbReference>
<dbReference type="RefSeq" id="WP_009893275.1">
    <property type="nucleotide sequence ID" value="NZ_CP008785.1"/>
</dbReference>
<dbReference type="SMR" id="Q2T1P5"/>
<dbReference type="GeneID" id="45120109"/>
<dbReference type="KEGG" id="bte:BTH_I0346"/>
<dbReference type="HOGENOM" id="CLU_033804_1_1_4"/>
<dbReference type="Proteomes" id="UP000001930">
    <property type="component" value="Chromosome I"/>
</dbReference>
<dbReference type="GO" id="GO:0005737">
    <property type="term" value="C:cytoplasm"/>
    <property type="evidence" value="ECO:0007669"/>
    <property type="project" value="UniProtKB-SubCell"/>
</dbReference>
<dbReference type="GO" id="GO:0008772">
    <property type="term" value="F:[isocitrate dehydrogenase (NADP+)] kinase activity"/>
    <property type="evidence" value="ECO:0007669"/>
    <property type="project" value="UniProtKB-UniRule"/>
</dbReference>
<dbReference type="GO" id="GO:0016208">
    <property type="term" value="F:AMP binding"/>
    <property type="evidence" value="ECO:0007669"/>
    <property type="project" value="TreeGrafter"/>
</dbReference>
<dbReference type="GO" id="GO:0005524">
    <property type="term" value="F:ATP binding"/>
    <property type="evidence" value="ECO:0007669"/>
    <property type="project" value="UniProtKB-UniRule"/>
</dbReference>
<dbReference type="GO" id="GO:0004721">
    <property type="term" value="F:phosphoprotein phosphatase activity"/>
    <property type="evidence" value="ECO:0007669"/>
    <property type="project" value="UniProtKB-KW"/>
</dbReference>
<dbReference type="GO" id="GO:0004674">
    <property type="term" value="F:protein serine/threonine kinase activity"/>
    <property type="evidence" value="ECO:0007669"/>
    <property type="project" value="UniProtKB-KW"/>
</dbReference>
<dbReference type="GO" id="GO:0006006">
    <property type="term" value="P:glucose metabolic process"/>
    <property type="evidence" value="ECO:0007669"/>
    <property type="project" value="InterPro"/>
</dbReference>
<dbReference type="GO" id="GO:0006097">
    <property type="term" value="P:glyoxylate cycle"/>
    <property type="evidence" value="ECO:0007669"/>
    <property type="project" value="UniProtKB-UniRule"/>
</dbReference>
<dbReference type="GO" id="GO:0006099">
    <property type="term" value="P:tricarboxylic acid cycle"/>
    <property type="evidence" value="ECO:0007669"/>
    <property type="project" value="UniProtKB-UniRule"/>
</dbReference>
<dbReference type="HAMAP" id="MF_00747">
    <property type="entry name" value="AceK"/>
    <property type="match status" value="1"/>
</dbReference>
<dbReference type="InterPro" id="IPR046855">
    <property type="entry name" value="AceK_kinase"/>
</dbReference>
<dbReference type="InterPro" id="IPR046854">
    <property type="entry name" value="AceK_regulatory"/>
</dbReference>
<dbReference type="InterPro" id="IPR010452">
    <property type="entry name" value="Isocitrate_DH_AceK"/>
</dbReference>
<dbReference type="NCBIfam" id="NF002804">
    <property type="entry name" value="PRK02946.1"/>
    <property type="match status" value="1"/>
</dbReference>
<dbReference type="PANTHER" id="PTHR39559">
    <property type="match status" value="1"/>
</dbReference>
<dbReference type="PANTHER" id="PTHR39559:SF1">
    <property type="entry name" value="ISOCITRATE DEHYDROGENASE KINASE_PHOSPHATASE"/>
    <property type="match status" value="1"/>
</dbReference>
<dbReference type="Pfam" id="PF06315">
    <property type="entry name" value="AceK_kinase"/>
    <property type="match status" value="1"/>
</dbReference>
<dbReference type="Pfam" id="PF20423">
    <property type="entry name" value="AceK_regulatory"/>
    <property type="match status" value="1"/>
</dbReference>
<dbReference type="PIRSF" id="PIRSF000719">
    <property type="entry name" value="AceK"/>
    <property type="match status" value="1"/>
</dbReference>
<sequence length="603" mass="70047">MNHFPKLLSSQIGFDVAQTILENFDRHYRIFREAAVEAKDLFERSDWHGLQRLARERITSYDDRVRECVELLEDEYDAENIDHDVWPQIKLHYIGLLTSHRQPECAETFFNSVCCKILHRAYFNNDFIFVRPAISTEYIENDEPAAKPTYRAYYPGSEGLAATLERIVTNFQLNPPFEDLERDIACIMQAIHDEFGAFDEAVNFQIHVLSSLFYRNKTAYIVGRIINGDRVLPFAVPIRHARAGVLALDTVLLRRDQLKIIFSFSHSYFLVDMNVPSAYVQFLRSIMPGKPKAEIYTSVGLQKQGKNLFYRDLLHHLSHSSDRFIIAPGIKGLVMLVFTLPSFPYVFKMIKDHFPPPKETTREQIMDKYLLVKRHDRLGRMADTLEYSSVALPLARLDDALVRELEKEVPSLIEYEGDSLVIKHLYIERRMVPLNLYLQNGSDAEIEHGVREYGNAVKELIQANIFPGDMLYKNFGVTRHGRVVFYDYDEIEYLTDCNVRRVPPPRNDEDEMSGEPWYTVGPHDIFPETYAPFLLGDPRVREHFLAHHADFFDPQLWQDSKDRLLRGELPDFFAYEPALRFCLRYPERFAPGDAAEDGKRAAA</sequence>
<proteinExistence type="inferred from homology"/>
<accession>Q2T1P5</accession>
<organism>
    <name type="scientific">Burkholderia thailandensis (strain ATCC 700388 / DSM 13276 / CCUG 48851 / CIP 106301 / E264)</name>
    <dbReference type="NCBI Taxonomy" id="271848"/>
    <lineage>
        <taxon>Bacteria</taxon>
        <taxon>Pseudomonadati</taxon>
        <taxon>Pseudomonadota</taxon>
        <taxon>Betaproteobacteria</taxon>
        <taxon>Burkholderiales</taxon>
        <taxon>Burkholderiaceae</taxon>
        <taxon>Burkholderia</taxon>
        <taxon>pseudomallei group</taxon>
    </lineage>
</organism>
<keyword id="KW-0067">ATP-binding</keyword>
<keyword id="KW-0963">Cytoplasm</keyword>
<keyword id="KW-0329">Glyoxylate bypass</keyword>
<keyword id="KW-0378">Hydrolase</keyword>
<keyword id="KW-0418">Kinase</keyword>
<keyword id="KW-0547">Nucleotide-binding</keyword>
<keyword id="KW-0904">Protein phosphatase</keyword>
<keyword id="KW-0723">Serine/threonine-protein kinase</keyword>
<keyword id="KW-0808">Transferase</keyword>
<keyword id="KW-0816">Tricarboxylic acid cycle</keyword>